<gene>
    <name type="primary">IGFBPL1</name>
</gene>
<accession>A5PKD8</accession>
<dbReference type="EMBL" id="BC142451">
    <property type="protein sequence ID" value="AAI42452.1"/>
    <property type="molecule type" value="mRNA"/>
</dbReference>
<dbReference type="RefSeq" id="NP_001092631.1">
    <property type="nucleotide sequence ID" value="NM_001099161.2"/>
</dbReference>
<dbReference type="SMR" id="A5PKD8"/>
<dbReference type="FunCoup" id="A5PKD8">
    <property type="interactions" value="38"/>
</dbReference>
<dbReference type="STRING" id="9913.ENSBTAP00000018719"/>
<dbReference type="GlyCosmos" id="A5PKD8">
    <property type="glycosylation" value="1 site, No reported glycans"/>
</dbReference>
<dbReference type="GlyGen" id="A5PKD8">
    <property type="glycosylation" value="1 site"/>
</dbReference>
<dbReference type="PaxDb" id="9913-ENSBTAP00000018719"/>
<dbReference type="GeneID" id="616886"/>
<dbReference type="KEGG" id="bta:616886"/>
<dbReference type="CTD" id="347252"/>
<dbReference type="VEuPathDB" id="HostDB:ENSBTAG00000014078"/>
<dbReference type="eggNOG" id="ENOG502QSKF">
    <property type="taxonomic scope" value="Eukaryota"/>
</dbReference>
<dbReference type="HOGENOM" id="CLU_075590_0_1_1"/>
<dbReference type="InParanoid" id="A5PKD8"/>
<dbReference type="OMA" id="PGMVCVS"/>
<dbReference type="OrthoDB" id="10012075at2759"/>
<dbReference type="TreeFam" id="TF331645"/>
<dbReference type="Proteomes" id="UP000009136">
    <property type="component" value="Chromosome 8"/>
</dbReference>
<dbReference type="Bgee" id="ENSBTAG00000014078">
    <property type="expression patterns" value="Expressed in Ammon's horn and 33 other cell types or tissues"/>
</dbReference>
<dbReference type="GO" id="GO:0062023">
    <property type="term" value="C:collagen-containing extracellular matrix"/>
    <property type="evidence" value="ECO:0000318"/>
    <property type="project" value="GO_Central"/>
</dbReference>
<dbReference type="GO" id="GO:0005615">
    <property type="term" value="C:extracellular space"/>
    <property type="evidence" value="ECO:0000318"/>
    <property type="project" value="GO_Central"/>
</dbReference>
<dbReference type="GO" id="GO:0005520">
    <property type="term" value="F:insulin-like growth factor binding"/>
    <property type="evidence" value="ECO:0007669"/>
    <property type="project" value="InterPro"/>
</dbReference>
<dbReference type="GO" id="GO:0001558">
    <property type="term" value="P:regulation of cell growth"/>
    <property type="evidence" value="ECO:0007669"/>
    <property type="project" value="InterPro"/>
</dbReference>
<dbReference type="GO" id="GO:0009966">
    <property type="term" value="P:regulation of signal transduction"/>
    <property type="evidence" value="ECO:0000318"/>
    <property type="project" value="GO_Central"/>
</dbReference>
<dbReference type="CDD" id="cd00104">
    <property type="entry name" value="KAZAL_FS"/>
    <property type="match status" value="1"/>
</dbReference>
<dbReference type="FunFam" id="2.60.40.10:FF:000763">
    <property type="entry name" value="Insulin-like growth factor binding protein 7"/>
    <property type="match status" value="1"/>
</dbReference>
<dbReference type="Gene3D" id="3.30.60.30">
    <property type="match status" value="1"/>
</dbReference>
<dbReference type="Gene3D" id="4.10.40.20">
    <property type="match status" value="1"/>
</dbReference>
<dbReference type="Gene3D" id="2.60.40.10">
    <property type="entry name" value="Immunoglobulins"/>
    <property type="match status" value="1"/>
</dbReference>
<dbReference type="InterPro" id="IPR009030">
    <property type="entry name" value="Growth_fac_rcpt_cys_sf"/>
</dbReference>
<dbReference type="InterPro" id="IPR007110">
    <property type="entry name" value="Ig-like_dom"/>
</dbReference>
<dbReference type="InterPro" id="IPR036179">
    <property type="entry name" value="Ig-like_dom_sf"/>
</dbReference>
<dbReference type="InterPro" id="IPR013783">
    <property type="entry name" value="Ig-like_fold"/>
</dbReference>
<dbReference type="InterPro" id="IPR013098">
    <property type="entry name" value="Ig_I-set"/>
</dbReference>
<dbReference type="InterPro" id="IPR003599">
    <property type="entry name" value="Ig_sub"/>
</dbReference>
<dbReference type="InterPro" id="IPR003598">
    <property type="entry name" value="Ig_sub2"/>
</dbReference>
<dbReference type="InterPro" id="IPR000867">
    <property type="entry name" value="IGFBP-like"/>
</dbReference>
<dbReference type="InterPro" id="IPR011390">
    <property type="entry name" value="IGFBP_rP_mac25"/>
</dbReference>
<dbReference type="InterPro" id="IPR002350">
    <property type="entry name" value="Kazal_dom"/>
</dbReference>
<dbReference type="InterPro" id="IPR036058">
    <property type="entry name" value="Kazal_dom_sf"/>
</dbReference>
<dbReference type="PANTHER" id="PTHR14186">
    <property type="entry name" value="INSULIN-LIKE GROWTH FACTOR BINDING PROTEIN-RELATED"/>
    <property type="match status" value="1"/>
</dbReference>
<dbReference type="PANTHER" id="PTHR14186:SF16">
    <property type="entry name" value="INSULIN-LIKE GROWTH FACTOR-BINDING PROTEIN-LIKE 1"/>
    <property type="match status" value="1"/>
</dbReference>
<dbReference type="Pfam" id="PF07679">
    <property type="entry name" value="I-set"/>
    <property type="match status" value="1"/>
</dbReference>
<dbReference type="Pfam" id="PF00219">
    <property type="entry name" value="IGFBP"/>
    <property type="match status" value="1"/>
</dbReference>
<dbReference type="Pfam" id="PF07648">
    <property type="entry name" value="Kazal_2"/>
    <property type="match status" value="1"/>
</dbReference>
<dbReference type="PIRSF" id="PIRSF018239">
    <property type="entry name" value="IGFBP_rP_mac25"/>
    <property type="match status" value="1"/>
</dbReference>
<dbReference type="SMART" id="SM00121">
    <property type="entry name" value="IB"/>
    <property type="match status" value="1"/>
</dbReference>
<dbReference type="SMART" id="SM00409">
    <property type="entry name" value="IG"/>
    <property type="match status" value="1"/>
</dbReference>
<dbReference type="SMART" id="SM00408">
    <property type="entry name" value="IGc2"/>
    <property type="match status" value="1"/>
</dbReference>
<dbReference type="SMART" id="SM00280">
    <property type="entry name" value="KAZAL"/>
    <property type="match status" value="1"/>
</dbReference>
<dbReference type="SUPFAM" id="SSF57184">
    <property type="entry name" value="Growth factor receptor domain"/>
    <property type="match status" value="1"/>
</dbReference>
<dbReference type="SUPFAM" id="SSF48726">
    <property type="entry name" value="Immunoglobulin"/>
    <property type="match status" value="1"/>
</dbReference>
<dbReference type="SUPFAM" id="SSF100895">
    <property type="entry name" value="Kazal-type serine protease inhibitors"/>
    <property type="match status" value="1"/>
</dbReference>
<dbReference type="PROSITE" id="PS50835">
    <property type="entry name" value="IG_LIKE"/>
    <property type="match status" value="1"/>
</dbReference>
<dbReference type="PROSITE" id="PS51323">
    <property type="entry name" value="IGFBP_N_2"/>
    <property type="match status" value="1"/>
</dbReference>
<dbReference type="PROSITE" id="PS51465">
    <property type="entry name" value="KAZAL_2"/>
    <property type="match status" value="1"/>
</dbReference>
<keyword id="KW-1015">Disulfide bond</keyword>
<keyword id="KW-0325">Glycoprotein</keyword>
<keyword id="KW-0393">Immunoglobulin domain</keyword>
<keyword id="KW-1185">Reference proteome</keyword>
<keyword id="KW-0964">Secreted</keyword>
<keyword id="KW-0732">Signal</keyword>
<comment type="function">
    <text evidence="1">IGF-binding proteins prolong the half-life of IGFs and have been shown to either inhibit or stimulate the growth promoting effects of the IGFs in cell culture. They alter the interaction of IGFs with their cell surface receptors (By similarity).</text>
</comment>
<comment type="subcellular location">
    <subcellularLocation>
        <location evidence="1">Secreted</location>
    </subcellularLocation>
</comment>
<feature type="signal peptide" evidence="2">
    <location>
        <begin position="1"/>
        <end position="21"/>
    </location>
</feature>
<feature type="chain" id="PRO_0000297686" description="Insulin-like growth factor-binding protein-like 1">
    <location>
        <begin position="22"/>
        <end position="274"/>
    </location>
</feature>
<feature type="domain" description="IGFBP N-terminal" evidence="4">
    <location>
        <begin position="30"/>
        <end position="105"/>
    </location>
</feature>
<feature type="domain" description="Kazal-like" evidence="5">
    <location>
        <begin position="91"/>
        <end position="149"/>
    </location>
</feature>
<feature type="domain" description="Ig-like C2-type">
    <location>
        <begin position="151"/>
        <end position="255"/>
    </location>
</feature>
<feature type="glycosylation site" description="N-linked (GlcNAc...) asparagine" evidence="2">
    <location>
        <position position="162"/>
    </location>
</feature>
<feature type="disulfide bond" evidence="4">
    <location>
        <begin position="34"/>
        <end position="59"/>
    </location>
</feature>
<feature type="disulfide bond" evidence="4">
    <location>
        <begin position="37"/>
        <end position="61"/>
    </location>
</feature>
<feature type="disulfide bond" evidence="4">
    <location>
        <begin position="42"/>
        <end position="62"/>
    </location>
</feature>
<feature type="disulfide bond" evidence="4">
    <location>
        <begin position="48"/>
        <end position="65"/>
    </location>
</feature>
<feature type="disulfide bond" evidence="4">
    <location>
        <begin position="73"/>
        <end position="87"/>
    </location>
</feature>
<feature type="disulfide bond" evidence="4">
    <location>
        <begin position="81"/>
        <end position="102"/>
    </location>
</feature>
<feature type="disulfide bond" evidence="5">
    <location>
        <begin position="111"/>
        <end position="147"/>
    </location>
</feature>
<feature type="disulfide bond" evidence="3">
    <location>
        <begin position="172"/>
        <end position="239"/>
    </location>
</feature>
<sequence length="274" mass="28673">MPRSPGLFLLLLVLQPLPALGLGLRSAGGRNPECGPCRPERCPEPVRCPVPGIVARDECGCCALCLGAEGASCGGRAGARCGPGLVCASRAAGAAPEGTGLCVCAQRGSVCGSDGRSYPSVCALRLRARQAPRALPGHLHKARDGPCEFAPVVITPPQSVHNVTGAQVYLSCEVRAVPTPVVTWRKVTRSPEGTQVMEELPGDHTNIAVQVQGGPSDHEATAWVLINPLRKEDEGVYQCHSANAVGEAQSHGTVTVVDRSQYRAPRFPAPDDRL</sequence>
<proteinExistence type="evidence at transcript level"/>
<name>IBPL1_BOVIN</name>
<evidence type="ECO:0000250" key="1"/>
<evidence type="ECO:0000255" key="2"/>
<evidence type="ECO:0000255" key="3">
    <source>
        <dbReference type="PROSITE-ProRule" id="PRU00114"/>
    </source>
</evidence>
<evidence type="ECO:0000255" key="4">
    <source>
        <dbReference type="PROSITE-ProRule" id="PRU00653"/>
    </source>
</evidence>
<evidence type="ECO:0000255" key="5">
    <source>
        <dbReference type="PROSITE-ProRule" id="PRU00798"/>
    </source>
</evidence>
<reference key="1">
    <citation type="submission" date="2007-06" db="EMBL/GenBank/DDBJ databases">
        <authorList>
            <consortium name="NIH - Mammalian Gene Collection (MGC) project"/>
        </authorList>
    </citation>
    <scope>NUCLEOTIDE SEQUENCE [LARGE SCALE MRNA]</scope>
    <source>
        <strain>Hereford</strain>
        <tissue>Hypothalamus</tissue>
    </source>
</reference>
<protein>
    <recommendedName>
        <fullName>Insulin-like growth factor-binding protein-like 1</fullName>
    </recommendedName>
</protein>
<organism>
    <name type="scientific">Bos taurus</name>
    <name type="common">Bovine</name>
    <dbReference type="NCBI Taxonomy" id="9913"/>
    <lineage>
        <taxon>Eukaryota</taxon>
        <taxon>Metazoa</taxon>
        <taxon>Chordata</taxon>
        <taxon>Craniata</taxon>
        <taxon>Vertebrata</taxon>
        <taxon>Euteleostomi</taxon>
        <taxon>Mammalia</taxon>
        <taxon>Eutheria</taxon>
        <taxon>Laurasiatheria</taxon>
        <taxon>Artiodactyla</taxon>
        <taxon>Ruminantia</taxon>
        <taxon>Pecora</taxon>
        <taxon>Bovidae</taxon>
        <taxon>Bovinae</taxon>
        <taxon>Bos</taxon>
    </lineage>
</organism>